<evidence type="ECO:0000255" key="1">
    <source>
        <dbReference type="HAMAP-Rule" id="MF_00295"/>
    </source>
</evidence>
<evidence type="ECO:0000269" key="2">
    <source>
    </source>
</evidence>
<evidence type="ECO:0000303" key="3">
    <source>
    </source>
</evidence>
<evidence type="ECO:0000312" key="4">
    <source>
        <dbReference type="EMBL" id="EGW22387.1"/>
    </source>
</evidence>
<name>METAS_METTV</name>
<comment type="function">
    <text evidence="1 2">Transfers a succinyl group from succinyl-CoA to L-homoserine, forming succinyl-L-homoserine.</text>
</comment>
<comment type="catalytic activity">
    <reaction evidence="1 2">
        <text>L-homoserine + succinyl-CoA = O-succinyl-L-homoserine + CoA</text>
        <dbReference type="Rhea" id="RHEA:22008"/>
        <dbReference type="ChEBI" id="CHEBI:57287"/>
        <dbReference type="ChEBI" id="CHEBI:57292"/>
        <dbReference type="ChEBI" id="CHEBI:57476"/>
        <dbReference type="ChEBI" id="CHEBI:57661"/>
        <dbReference type="EC" id="2.3.1.46"/>
    </reaction>
</comment>
<comment type="pathway">
    <text evidence="1">Amino-acid biosynthesis; L-methionine biosynthesis via de novo pathway; O-succinyl-L-homoserine from L-homoserine: step 1/1.</text>
</comment>
<comment type="subcellular location">
    <subcellularLocation>
        <location evidence="1">Cytoplasm</location>
    </subcellularLocation>
</comment>
<comment type="similarity">
    <text evidence="1">Belongs to the MetA family.</text>
</comment>
<feature type="chain" id="PRO_0000440353" description="Homoserine O-succinyltransferase">
    <location>
        <begin position="1"/>
        <end position="354"/>
    </location>
</feature>
<feature type="active site" description="Acyl-thioester intermediate" evidence="1">
    <location>
        <position position="146"/>
    </location>
</feature>
<feature type="active site" description="Proton acceptor" evidence="1">
    <location>
        <position position="239"/>
    </location>
</feature>
<feature type="active site" evidence="1">
    <location>
        <position position="241"/>
    </location>
</feature>
<feature type="binding site" evidence="1">
    <location>
        <position position="167"/>
    </location>
    <ligand>
        <name>substrate</name>
    </ligand>
</feature>
<feature type="binding site" evidence="1">
    <location>
        <position position="196"/>
    </location>
    <ligand>
        <name>substrate</name>
    </ligand>
</feature>
<feature type="binding site" evidence="1">
    <location>
        <position position="253"/>
    </location>
    <ligand>
        <name>substrate</name>
    </ligand>
</feature>
<feature type="site" description="Important for acyl-CoA specificity" evidence="1">
    <location>
        <position position="113"/>
    </location>
</feature>
<feature type="site" description="Important for acyl-CoA specificity" evidence="1">
    <location>
        <position position="147"/>
    </location>
</feature>
<feature type="site" description="Important for substrate specificity" evidence="1">
    <location>
        <position position="196"/>
    </location>
</feature>
<sequence length="354" mass="41079">MPLVAHTDLPTFQRLREEGEEILDPDRASNQDIREMHIGLLNMMPDAALEATERQFFRLVGACNQIVQFHVHPFTIEGLKRSPEAQAHIAKYYESFEQIKRDGLDALIISGANVSHPRLPEEDFWQPLSEVFFWAKENVTSILCSCLATHALIQYCYGIERTRLPAKRWGVFSHKLTDRTHPLVAEINTRFDVPHSRFNEIFQSDMERHGLKVLAVSKEAGVHLAVSPDGFRIVFFQGHPEYDDISLLKEYKREILRFYRAERDDYPPFPENYFNDVVQQILVDYEQRVRSAKQSGQRLEEFPESLILEHIDNTWSDTAKAVFNNWLGKIYQLTHQERGLPFMDGVDPNNPLGL</sequence>
<protein>
    <recommendedName>
        <fullName evidence="1">Homoserine O-succinyltransferase</fullName>
        <shortName evidence="1 3">HST</shortName>
        <ecNumber evidence="1 2">2.3.1.46</ecNumber>
    </recommendedName>
    <alternativeName>
        <fullName evidence="1">Homoserine transsuccinylase</fullName>
        <shortName evidence="1">HTS</shortName>
    </alternativeName>
</protein>
<reference key="1">
    <citation type="submission" date="2011-06" db="EMBL/GenBank/DDBJ databases">
        <title>Genomic sequence of Methylobacter tundripaludum SV96.</title>
        <authorList>
            <consortium name="US DOE Joint Genome Institute"/>
            <person name="Lucas S."/>
            <person name="Han J."/>
            <person name="Lapidus A."/>
            <person name="Cheng J.-F."/>
            <person name="Goodwin L."/>
            <person name="Pitluck S."/>
            <person name="Held B."/>
            <person name="Detter J.C."/>
            <person name="Han C."/>
            <person name="Tapia R."/>
            <person name="Land M."/>
            <person name="Hauser L."/>
            <person name="Kyrpides N."/>
            <person name="Ivanova N."/>
            <person name="Ovchinnikova G."/>
            <person name="Pagani I."/>
            <person name="Klotz M.G."/>
            <person name="Dispirito A.A."/>
            <person name="Murrell J.C."/>
            <person name="Dunfield P."/>
            <person name="Kalyuzhnaya M.G."/>
            <person name="Svenning M."/>
            <person name="Trotsenko Y.A."/>
            <person name="Stein L.Y."/>
            <person name="Woyke T."/>
        </authorList>
    </citation>
    <scope>NUCLEOTIDE SEQUENCE [LARGE SCALE GENOMIC DNA]</scope>
    <source>
        <strain>ATCC BAA-1195 / DSM 17260 / SV96</strain>
    </source>
</reference>
<reference key="2">
    <citation type="journal article" date="2017" name="Nat. Chem. Biol.">
        <title>Parallel evolution of non-homologous isofunctional enzymes in methionine biosynthesis.</title>
        <authorList>
            <person name="Bastard K."/>
            <person name="Perret A."/>
            <person name="Mariage A."/>
            <person name="Bessonnet T."/>
            <person name="Pinet-Turpault A."/>
            <person name="Petit J.L."/>
            <person name="Darii E."/>
            <person name="Bazire P."/>
            <person name="Vergne-Vaxelaire C."/>
            <person name="Brewee C."/>
            <person name="Debard A."/>
            <person name="Pellouin V."/>
            <person name="Besnard-Gonnet M."/>
            <person name="Artiguenave F."/>
            <person name="Medigue C."/>
            <person name="Vallenet D."/>
            <person name="Danchin A."/>
            <person name="Zaparucha A."/>
            <person name="Weissenbach J."/>
            <person name="Salanoubat M."/>
            <person name="de Berardinis V."/>
        </authorList>
    </citation>
    <scope>FUNCTION</scope>
    <scope>CATALYTIC ACTIVITY</scope>
</reference>
<keyword id="KW-0012">Acyltransferase</keyword>
<keyword id="KW-0028">Amino-acid biosynthesis</keyword>
<keyword id="KW-0963">Cytoplasm</keyword>
<keyword id="KW-0486">Methionine biosynthesis</keyword>
<keyword id="KW-1185">Reference proteome</keyword>
<keyword id="KW-0808">Transferase</keyword>
<organism>
    <name type="scientific">Methylobacter tundripaludum (strain ATCC BAA-1195 / DSM 17260 / SV96)</name>
    <dbReference type="NCBI Taxonomy" id="697282"/>
    <lineage>
        <taxon>Bacteria</taxon>
        <taxon>Pseudomonadati</taxon>
        <taxon>Pseudomonadota</taxon>
        <taxon>Gammaproteobacteria</taxon>
        <taxon>Methylococcales</taxon>
        <taxon>Methylococcaceae</taxon>
        <taxon>Methylobacter</taxon>
    </lineage>
</organism>
<proteinExistence type="evidence at protein level"/>
<gene>
    <name evidence="1 3" type="primary">metAS</name>
    <name evidence="4" type="ORF">Mettu_1201</name>
</gene>
<accession>G3ISL7</accession>
<dbReference type="EC" id="2.3.1.46" evidence="1 2"/>
<dbReference type="EMBL" id="JH109152">
    <property type="protein sequence ID" value="EGW22387.1"/>
    <property type="molecule type" value="Genomic_DNA"/>
</dbReference>
<dbReference type="RefSeq" id="WP_006890358.1">
    <property type="nucleotide sequence ID" value="NZ_JH109152.1"/>
</dbReference>
<dbReference type="SMR" id="G3ISL7"/>
<dbReference type="STRING" id="697282.Mettu_1201"/>
<dbReference type="eggNOG" id="COG1897">
    <property type="taxonomic scope" value="Bacteria"/>
</dbReference>
<dbReference type="HOGENOM" id="CLU_057851_0_1_6"/>
<dbReference type="OrthoDB" id="9772423at2"/>
<dbReference type="UniPathway" id="UPA00051">
    <property type="reaction ID" value="UER00075"/>
</dbReference>
<dbReference type="Proteomes" id="UP000004664">
    <property type="component" value="Unassembled WGS sequence"/>
</dbReference>
<dbReference type="GO" id="GO:0005737">
    <property type="term" value="C:cytoplasm"/>
    <property type="evidence" value="ECO:0007669"/>
    <property type="project" value="UniProtKB-SubCell"/>
</dbReference>
<dbReference type="GO" id="GO:0004414">
    <property type="term" value="F:homoserine O-acetyltransferase activity"/>
    <property type="evidence" value="ECO:0007669"/>
    <property type="project" value="UniProtKB-UniRule"/>
</dbReference>
<dbReference type="GO" id="GO:0008899">
    <property type="term" value="F:homoserine O-succinyltransferase activity"/>
    <property type="evidence" value="ECO:0007669"/>
    <property type="project" value="UniProtKB-EC"/>
</dbReference>
<dbReference type="GO" id="GO:0009086">
    <property type="term" value="P:methionine biosynthetic process"/>
    <property type="evidence" value="ECO:0007669"/>
    <property type="project" value="UniProtKB-UniRule"/>
</dbReference>
<dbReference type="CDD" id="cd03131">
    <property type="entry name" value="GATase1_HTS"/>
    <property type="match status" value="1"/>
</dbReference>
<dbReference type="Gene3D" id="3.40.50.880">
    <property type="match status" value="1"/>
</dbReference>
<dbReference type="HAMAP" id="MF_00295">
    <property type="entry name" value="MetA_acyltransf"/>
    <property type="match status" value="1"/>
</dbReference>
<dbReference type="InterPro" id="IPR029062">
    <property type="entry name" value="Class_I_gatase-like"/>
</dbReference>
<dbReference type="InterPro" id="IPR033752">
    <property type="entry name" value="MetA_family"/>
</dbReference>
<dbReference type="NCBIfam" id="NF003776">
    <property type="entry name" value="PRK05368.1-3"/>
    <property type="match status" value="1"/>
</dbReference>
<dbReference type="PANTHER" id="PTHR20919">
    <property type="entry name" value="HOMOSERINE O-SUCCINYLTRANSFERASE"/>
    <property type="match status" value="1"/>
</dbReference>
<dbReference type="PANTHER" id="PTHR20919:SF0">
    <property type="entry name" value="HOMOSERINE O-SUCCINYLTRANSFERASE"/>
    <property type="match status" value="1"/>
</dbReference>
<dbReference type="Pfam" id="PF04204">
    <property type="entry name" value="HTS"/>
    <property type="match status" value="1"/>
</dbReference>
<dbReference type="PIRSF" id="PIRSF000450">
    <property type="entry name" value="H_ser_succinyltr"/>
    <property type="match status" value="1"/>
</dbReference>
<dbReference type="SUPFAM" id="SSF52317">
    <property type="entry name" value="Class I glutamine amidotransferase-like"/>
    <property type="match status" value="1"/>
</dbReference>